<comment type="function">
    <text evidence="1">Involved in the heme and chlorophyll biosynthesis. Catalyzes the aerobic oxidative decarboxylation of propionate groups of rings A and B of coproporphyrinogen-III to yield the vinyl groups in protoporphyrinogen-IX.</text>
</comment>
<comment type="catalytic activity">
    <reaction evidence="1">
        <text>coproporphyrinogen III + O2 + 2 H(+) = protoporphyrinogen IX + 2 CO2 + 2 H2O</text>
        <dbReference type="Rhea" id="RHEA:18257"/>
        <dbReference type="ChEBI" id="CHEBI:15377"/>
        <dbReference type="ChEBI" id="CHEBI:15378"/>
        <dbReference type="ChEBI" id="CHEBI:15379"/>
        <dbReference type="ChEBI" id="CHEBI:16526"/>
        <dbReference type="ChEBI" id="CHEBI:57307"/>
        <dbReference type="ChEBI" id="CHEBI:57309"/>
        <dbReference type="EC" id="1.3.3.3"/>
    </reaction>
</comment>
<comment type="cofactor">
    <cofactor evidence="1">
        <name>a divalent metal cation</name>
        <dbReference type="ChEBI" id="CHEBI:60240"/>
    </cofactor>
</comment>
<comment type="pathway">
    <text evidence="1">Porphyrin-containing compound metabolism; protoporphyrin-IX biosynthesis; protoporphyrinogen-IX from coproporphyrinogen-III (O2 route): step 1/1.</text>
</comment>
<comment type="subunit">
    <text evidence="1">Homodimer.</text>
</comment>
<comment type="subcellular location">
    <subcellularLocation>
        <location evidence="1">Cytoplasm</location>
    </subcellularLocation>
</comment>
<comment type="similarity">
    <text evidence="1">Belongs to the aerobic coproporphyrinogen-III oxidase family.</text>
</comment>
<name>HEM6_GLOVI</name>
<gene>
    <name evidence="1" type="primary">hemF</name>
    <name type="ordered locus">gll3876</name>
</gene>
<evidence type="ECO:0000255" key="1">
    <source>
        <dbReference type="HAMAP-Rule" id="MF_00333"/>
    </source>
</evidence>
<sequence>MQSLQDNITSRLEAVDGEGRFVEDLWEREEGGGGRSRILTEGRVFERAGIGFSEVHGSHLPPSILQQRPEAEGHPFYVTGTSMVLHPRNPYVPTVHLNYRYFEAGPVWWFGGGADLTPYYGFVEDAAHFHATLKAACDAHDPEYYPRFKKWCDEYFYLKHRQEPRGVGGIFFDYVQGDWEKIFAFAQSCGNAFLPAYLPIVERRHTLPYAERERNFQLYRRGRYVEFNLVWDRGTIFGLQTNGRIESILMSMPPLVRWEYNYRPEPGTAEAELYEVFLVPQDWASQAKR</sequence>
<proteinExistence type="inferred from homology"/>
<protein>
    <recommendedName>
        <fullName evidence="1">Oxygen-dependent coproporphyrinogen-III oxidase</fullName>
        <shortName evidence="1">CPO</shortName>
        <shortName evidence="1">Coprogen oxidase</shortName>
        <shortName evidence="1">Coproporphyrinogenase</shortName>
        <ecNumber evidence="1">1.3.3.3</ecNumber>
    </recommendedName>
</protein>
<feature type="chain" id="PRO_0000109898" description="Oxygen-dependent coproporphyrinogen-III oxidase">
    <location>
        <begin position="1"/>
        <end position="289"/>
    </location>
</feature>
<feature type="region of interest" description="Important for dimerization" evidence="1">
    <location>
        <begin position="224"/>
        <end position="259"/>
    </location>
</feature>
<feature type="active site" description="Proton donor" evidence="1">
    <location>
        <position position="96"/>
    </location>
</feature>
<feature type="binding site" evidence="1">
    <location>
        <position position="82"/>
    </location>
    <ligand>
        <name>substrate</name>
    </ligand>
</feature>
<feature type="binding site" evidence="1">
    <location>
        <position position="86"/>
    </location>
    <ligand>
        <name>a divalent metal cation</name>
        <dbReference type="ChEBI" id="CHEBI:60240"/>
    </ligand>
</feature>
<feature type="binding site" evidence="1">
    <location>
        <position position="96"/>
    </location>
    <ligand>
        <name>a divalent metal cation</name>
        <dbReference type="ChEBI" id="CHEBI:60240"/>
    </ligand>
</feature>
<feature type="binding site" evidence="1">
    <location>
        <begin position="98"/>
        <end position="100"/>
    </location>
    <ligand>
        <name>substrate</name>
    </ligand>
</feature>
<feature type="binding site" evidence="1">
    <location>
        <position position="130"/>
    </location>
    <ligand>
        <name>a divalent metal cation</name>
        <dbReference type="ChEBI" id="CHEBI:60240"/>
    </ligand>
</feature>
<feature type="binding site" evidence="1">
    <location>
        <position position="160"/>
    </location>
    <ligand>
        <name>a divalent metal cation</name>
        <dbReference type="ChEBI" id="CHEBI:60240"/>
    </ligand>
</feature>
<feature type="site" description="Important for dimerization" evidence="1">
    <location>
        <position position="160"/>
    </location>
</feature>
<reference key="1">
    <citation type="journal article" date="2003" name="DNA Res.">
        <title>Complete genome structure of Gloeobacter violaceus PCC 7421, a cyanobacterium that lacks thylakoids.</title>
        <authorList>
            <person name="Nakamura Y."/>
            <person name="Kaneko T."/>
            <person name="Sato S."/>
            <person name="Mimuro M."/>
            <person name="Miyashita H."/>
            <person name="Tsuchiya T."/>
            <person name="Sasamoto S."/>
            <person name="Watanabe A."/>
            <person name="Kawashima K."/>
            <person name="Kishida Y."/>
            <person name="Kiyokawa C."/>
            <person name="Kohara M."/>
            <person name="Matsumoto M."/>
            <person name="Matsuno A."/>
            <person name="Nakazaki N."/>
            <person name="Shimpo S."/>
            <person name="Takeuchi C."/>
            <person name="Yamada M."/>
            <person name="Tabata S."/>
        </authorList>
    </citation>
    <scope>NUCLEOTIDE SEQUENCE [LARGE SCALE GENOMIC DNA]</scope>
    <source>
        <strain>ATCC 29082 / PCC 7421</strain>
    </source>
</reference>
<accession>Q7NEK3</accession>
<keyword id="KW-0149">Chlorophyll biosynthesis</keyword>
<keyword id="KW-0963">Cytoplasm</keyword>
<keyword id="KW-0350">Heme biosynthesis</keyword>
<keyword id="KW-0479">Metal-binding</keyword>
<keyword id="KW-0560">Oxidoreductase</keyword>
<keyword id="KW-0627">Porphyrin biosynthesis</keyword>
<keyword id="KW-1185">Reference proteome</keyword>
<organism>
    <name type="scientific">Gloeobacter violaceus (strain ATCC 29082 / PCC 7421)</name>
    <dbReference type="NCBI Taxonomy" id="251221"/>
    <lineage>
        <taxon>Bacteria</taxon>
        <taxon>Bacillati</taxon>
        <taxon>Cyanobacteriota</taxon>
        <taxon>Cyanophyceae</taxon>
        <taxon>Gloeobacterales</taxon>
        <taxon>Gloeobacteraceae</taxon>
        <taxon>Gloeobacter</taxon>
    </lineage>
</organism>
<dbReference type="EC" id="1.3.3.3" evidence="1"/>
<dbReference type="EMBL" id="BA000045">
    <property type="protein sequence ID" value="BAC91817.1"/>
    <property type="molecule type" value="Genomic_DNA"/>
</dbReference>
<dbReference type="RefSeq" id="NP_926822.1">
    <property type="nucleotide sequence ID" value="NC_005125.1"/>
</dbReference>
<dbReference type="SMR" id="Q7NEK3"/>
<dbReference type="STRING" id="251221.gene:10761393"/>
<dbReference type="EnsemblBacteria" id="BAC91817">
    <property type="protein sequence ID" value="BAC91817"/>
    <property type="gene ID" value="BAC91817"/>
</dbReference>
<dbReference type="KEGG" id="gvi:gll3876"/>
<dbReference type="PATRIC" id="fig|251221.4.peg.3911"/>
<dbReference type="eggNOG" id="COG0408">
    <property type="taxonomic scope" value="Bacteria"/>
</dbReference>
<dbReference type="HOGENOM" id="CLU_026169_0_1_3"/>
<dbReference type="InParanoid" id="Q7NEK3"/>
<dbReference type="OrthoDB" id="9777553at2"/>
<dbReference type="PhylomeDB" id="Q7NEK3"/>
<dbReference type="UniPathway" id="UPA00251">
    <property type="reaction ID" value="UER00322"/>
</dbReference>
<dbReference type="Proteomes" id="UP000000557">
    <property type="component" value="Chromosome"/>
</dbReference>
<dbReference type="GO" id="GO:0005737">
    <property type="term" value="C:cytoplasm"/>
    <property type="evidence" value="ECO:0000318"/>
    <property type="project" value="GO_Central"/>
</dbReference>
<dbReference type="GO" id="GO:0004109">
    <property type="term" value="F:coproporphyrinogen oxidase activity"/>
    <property type="evidence" value="ECO:0000318"/>
    <property type="project" value="GO_Central"/>
</dbReference>
<dbReference type="GO" id="GO:0046872">
    <property type="term" value="F:metal ion binding"/>
    <property type="evidence" value="ECO:0007669"/>
    <property type="project" value="UniProtKB-KW"/>
</dbReference>
<dbReference type="GO" id="GO:0042803">
    <property type="term" value="F:protein homodimerization activity"/>
    <property type="evidence" value="ECO:0000250"/>
    <property type="project" value="UniProtKB"/>
</dbReference>
<dbReference type="GO" id="GO:0015995">
    <property type="term" value="P:chlorophyll biosynthetic process"/>
    <property type="evidence" value="ECO:0007669"/>
    <property type="project" value="UniProtKB-UniRule"/>
</dbReference>
<dbReference type="GO" id="GO:0006782">
    <property type="term" value="P:protoporphyrinogen IX biosynthetic process"/>
    <property type="evidence" value="ECO:0000318"/>
    <property type="project" value="GO_Central"/>
</dbReference>
<dbReference type="Gene3D" id="3.40.1500.10">
    <property type="entry name" value="Coproporphyrinogen III oxidase, aerobic"/>
    <property type="match status" value="1"/>
</dbReference>
<dbReference type="HAMAP" id="MF_00333">
    <property type="entry name" value="Coprogen_oxidas"/>
    <property type="match status" value="1"/>
</dbReference>
<dbReference type="InterPro" id="IPR001260">
    <property type="entry name" value="Coprogen_oxidase_aer"/>
</dbReference>
<dbReference type="InterPro" id="IPR036406">
    <property type="entry name" value="Coprogen_oxidase_aer_sf"/>
</dbReference>
<dbReference type="InterPro" id="IPR018375">
    <property type="entry name" value="Coprogen_oxidase_CS"/>
</dbReference>
<dbReference type="NCBIfam" id="NF003727">
    <property type="entry name" value="PRK05330.1"/>
    <property type="match status" value="1"/>
</dbReference>
<dbReference type="PANTHER" id="PTHR10755">
    <property type="entry name" value="COPROPORPHYRINOGEN III OXIDASE, MITOCHONDRIAL"/>
    <property type="match status" value="1"/>
</dbReference>
<dbReference type="PANTHER" id="PTHR10755:SF0">
    <property type="entry name" value="OXYGEN-DEPENDENT COPROPORPHYRINOGEN-III OXIDASE, MITOCHONDRIAL"/>
    <property type="match status" value="1"/>
</dbReference>
<dbReference type="Pfam" id="PF01218">
    <property type="entry name" value="Coprogen_oxidas"/>
    <property type="match status" value="1"/>
</dbReference>
<dbReference type="PIRSF" id="PIRSF000166">
    <property type="entry name" value="Coproporphyri_ox"/>
    <property type="match status" value="1"/>
</dbReference>
<dbReference type="PRINTS" id="PR00073">
    <property type="entry name" value="COPRGNOXDASE"/>
</dbReference>
<dbReference type="SUPFAM" id="SSF102886">
    <property type="entry name" value="Coproporphyrinogen III oxidase"/>
    <property type="match status" value="1"/>
</dbReference>
<dbReference type="PROSITE" id="PS01021">
    <property type="entry name" value="COPROGEN_OXIDASE"/>
    <property type="match status" value="1"/>
</dbReference>